<comment type="subcellular location">
    <subcellularLocation>
        <location evidence="3">Membrane</location>
        <topology evidence="3">Multi-pass membrane protein</topology>
    </subcellularLocation>
</comment>
<comment type="similarity">
    <text evidence="3">Belongs to the G-protein coupled receptor Fz/Smo family.</text>
</comment>
<reference key="1">
    <citation type="journal article" date="2005" name="Nature">
        <title>The genome of the social amoeba Dictyostelium discoideum.</title>
        <authorList>
            <person name="Eichinger L."/>
            <person name="Pachebat J.A."/>
            <person name="Gloeckner G."/>
            <person name="Rajandream M.A."/>
            <person name="Sucgang R."/>
            <person name="Berriman M."/>
            <person name="Song J."/>
            <person name="Olsen R."/>
            <person name="Szafranski K."/>
            <person name="Xu Q."/>
            <person name="Tunggal B."/>
            <person name="Kummerfeld S."/>
            <person name="Madera M."/>
            <person name="Konfortov B.A."/>
            <person name="Rivero F."/>
            <person name="Bankier A.T."/>
            <person name="Lehmann R."/>
            <person name="Hamlin N."/>
            <person name="Davies R."/>
            <person name="Gaudet P."/>
            <person name="Fey P."/>
            <person name="Pilcher K."/>
            <person name="Chen G."/>
            <person name="Saunders D."/>
            <person name="Sodergren E.J."/>
            <person name="Davis P."/>
            <person name="Kerhornou A."/>
            <person name="Nie X."/>
            <person name="Hall N."/>
            <person name="Anjard C."/>
            <person name="Hemphill L."/>
            <person name="Bason N."/>
            <person name="Farbrother P."/>
            <person name="Desany B."/>
            <person name="Just E."/>
            <person name="Morio T."/>
            <person name="Rost R."/>
            <person name="Churcher C.M."/>
            <person name="Cooper J."/>
            <person name="Haydock S."/>
            <person name="van Driessche N."/>
            <person name="Cronin A."/>
            <person name="Goodhead I."/>
            <person name="Muzny D.M."/>
            <person name="Mourier T."/>
            <person name="Pain A."/>
            <person name="Lu M."/>
            <person name="Harper D."/>
            <person name="Lindsay R."/>
            <person name="Hauser H."/>
            <person name="James K.D."/>
            <person name="Quiles M."/>
            <person name="Madan Babu M."/>
            <person name="Saito T."/>
            <person name="Buchrieser C."/>
            <person name="Wardroper A."/>
            <person name="Felder M."/>
            <person name="Thangavelu M."/>
            <person name="Johnson D."/>
            <person name="Knights A."/>
            <person name="Loulseged H."/>
            <person name="Mungall K.L."/>
            <person name="Oliver K."/>
            <person name="Price C."/>
            <person name="Quail M.A."/>
            <person name="Urushihara H."/>
            <person name="Hernandez J."/>
            <person name="Rabbinowitsch E."/>
            <person name="Steffen D."/>
            <person name="Sanders M."/>
            <person name="Ma J."/>
            <person name="Kohara Y."/>
            <person name="Sharp S."/>
            <person name="Simmonds M.N."/>
            <person name="Spiegler S."/>
            <person name="Tivey A."/>
            <person name="Sugano S."/>
            <person name="White B."/>
            <person name="Walker D."/>
            <person name="Woodward J.R."/>
            <person name="Winckler T."/>
            <person name="Tanaka Y."/>
            <person name="Shaulsky G."/>
            <person name="Schleicher M."/>
            <person name="Weinstock G.M."/>
            <person name="Rosenthal A."/>
            <person name="Cox E.C."/>
            <person name="Chisholm R.L."/>
            <person name="Gibbs R.A."/>
            <person name="Loomis W.F."/>
            <person name="Platzer M."/>
            <person name="Kay R.R."/>
            <person name="Williams J.G."/>
            <person name="Dear P.H."/>
            <person name="Noegel A.A."/>
            <person name="Barrell B.G."/>
            <person name="Kuspa A."/>
        </authorList>
    </citation>
    <scope>NUCLEOTIDE SEQUENCE [LARGE SCALE GENOMIC DNA]</scope>
    <source>
        <strain>AX4</strain>
    </source>
</reference>
<reference key="2">
    <citation type="journal article" date="2006" name="Eur. J. Cell Biol.">
        <title>The Dictyostelium repertoire of seven transmembrane domain receptors.</title>
        <authorList>
            <person name="Prabhu Y."/>
            <person name="Eichinger L."/>
        </authorList>
    </citation>
    <scope>NOMENCLATURE</scope>
</reference>
<sequence length="549" mass="63275">MKFNFKLILIILIINQILIINCKENKILEIYKSGNICPYPLHYRERTGSDDHDFDLGFVYARNDSNCLLPCPSPIYTSQEVNTLSLMIKITGTISFIASLILLLIYSPLINRMGYNRHTIGIFFLTFSVFLIMLTDIIYVHHGNDLICPQSHRYSRQNDSGCTITGILFQYGCIAAVLFWATLSLDLYLTLKKISTKKVEKWYLIILTLIALILTFVPLVKKSYGYLVTGLACWILDSTDQIIFFWAPFTAILGIGSILIVLVVYEIYKISKITKQNRGIFQSHIRPLLMVLFIFGQFLFILAFNALINNKYDEYSARMDSYIDCLFSSSSYSYLCRLKTFPFEMEFIVLFFLRLIGIEVLIFYGFTQQTKKILLHSFLVNNIFFKKYFIRLDGASLDFSTVDEELKVVNFSCNNNNNNNNSNSNSNSNLNNNLNNNLNNNNLNNNNNLNNLNNLNINNNLKNSQNNLNNSQQNEPLSSQKLSENGNVNVFMVESFDNNNSMINQFKHLEEKNNIILNSIISPVQEEQYEEDEINNKNINNNSNNDENN</sequence>
<evidence type="ECO:0000255" key="1"/>
<evidence type="ECO:0000256" key="2">
    <source>
        <dbReference type="SAM" id="MobiDB-lite"/>
    </source>
</evidence>
<evidence type="ECO:0000305" key="3"/>
<name>FSCA_DICDI</name>
<accession>Q54H37</accession>
<organism>
    <name type="scientific">Dictyostelium discoideum</name>
    <name type="common">Social amoeba</name>
    <dbReference type="NCBI Taxonomy" id="44689"/>
    <lineage>
        <taxon>Eukaryota</taxon>
        <taxon>Amoebozoa</taxon>
        <taxon>Evosea</taxon>
        <taxon>Eumycetozoa</taxon>
        <taxon>Dictyostelia</taxon>
        <taxon>Dictyosteliales</taxon>
        <taxon>Dictyosteliaceae</taxon>
        <taxon>Dictyostelium</taxon>
    </lineage>
</organism>
<protein>
    <recommendedName>
        <fullName>Frizzled/smoothened-like sans CRD protein A</fullName>
    </recommendedName>
</protein>
<feature type="signal peptide" evidence="1">
    <location>
        <begin position="1"/>
        <end position="22"/>
    </location>
</feature>
<feature type="chain" id="PRO_0000371354" description="Frizzled/smoothened-like sans CRD protein A">
    <location>
        <begin position="23"/>
        <end position="549"/>
    </location>
</feature>
<feature type="topological domain" description="Extracellular" evidence="1">
    <location>
        <begin position="23"/>
        <end position="89"/>
    </location>
</feature>
<feature type="transmembrane region" description="Helical" evidence="1">
    <location>
        <begin position="90"/>
        <end position="110"/>
    </location>
</feature>
<feature type="topological domain" description="Cytoplasmic" evidence="1">
    <location>
        <begin position="111"/>
        <end position="119"/>
    </location>
</feature>
<feature type="transmembrane region" description="Helical" evidence="1">
    <location>
        <begin position="120"/>
        <end position="140"/>
    </location>
</feature>
<feature type="topological domain" description="Extracellular" evidence="1">
    <location>
        <begin position="141"/>
        <end position="162"/>
    </location>
</feature>
<feature type="transmembrane region" description="Helical" evidence="1">
    <location>
        <begin position="163"/>
        <end position="183"/>
    </location>
</feature>
<feature type="topological domain" description="Cytoplasmic" evidence="1">
    <location>
        <begin position="184"/>
        <end position="198"/>
    </location>
</feature>
<feature type="transmembrane region" description="Helical" evidence="1">
    <location>
        <begin position="199"/>
        <end position="219"/>
    </location>
</feature>
<feature type="topological domain" description="Extracellular" evidence="1">
    <location>
        <begin position="220"/>
        <end position="241"/>
    </location>
</feature>
<feature type="transmembrane region" description="Helical" evidence="1">
    <location>
        <begin position="242"/>
        <end position="262"/>
    </location>
</feature>
<feature type="topological domain" description="Cytoplasmic" evidence="1">
    <location>
        <begin position="263"/>
        <end position="287"/>
    </location>
</feature>
<feature type="transmembrane region" description="Helical" evidence="1">
    <location>
        <begin position="288"/>
        <end position="308"/>
    </location>
</feature>
<feature type="topological domain" description="Extracellular" evidence="1">
    <location>
        <begin position="309"/>
        <end position="346"/>
    </location>
</feature>
<feature type="transmembrane region" description="Helical" evidence="1">
    <location>
        <begin position="347"/>
        <end position="367"/>
    </location>
</feature>
<feature type="topological domain" description="Cytoplasmic" evidence="1">
    <location>
        <begin position="368"/>
        <end position="549"/>
    </location>
</feature>
<feature type="region of interest" description="Disordered" evidence="2">
    <location>
        <begin position="417"/>
        <end position="483"/>
    </location>
</feature>
<feature type="region of interest" description="Disordered" evidence="2">
    <location>
        <begin position="528"/>
        <end position="549"/>
    </location>
</feature>
<feature type="coiled-coil region" evidence="1">
    <location>
        <begin position="432"/>
        <end position="475"/>
    </location>
</feature>
<feature type="compositionally biased region" description="Low complexity" evidence="2">
    <location>
        <begin position="417"/>
        <end position="474"/>
    </location>
</feature>
<feature type="compositionally biased region" description="Low complexity" evidence="2">
    <location>
        <begin position="536"/>
        <end position="549"/>
    </location>
</feature>
<feature type="glycosylation site" description="N-linked (GlcNAc...) asparagine" evidence="1">
    <location>
        <position position="63"/>
    </location>
</feature>
<feature type="glycosylation site" description="N-linked (GlcNAc...) asparagine" evidence="1">
    <location>
        <position position="158"/>
    </location>
</feature>
<keyword id="KW-0175">Coiled coil</keyword>
<keyword id="KW-0325">Glycoprotein</keyword>
<keyword id="KW-0472">Membrane</keyword>
<keyword id="KW-0675">Receptor</keyword>
<keyword id="KW-1185">Reference proteome</keyword>
<keyword id="KW-0732">Signal</keyword>
<keyword id="KW-0812">Transmembrane</keyword>
<keyword id="KW-1133">Transmembrane helix</keyword>
<proteinExistence type="inferred from homology"/>
<gene>
    <name type="primary">fscA</name>
    <name type="ORF">DDB_G0289725</name>
</gene>
<dbReference type="EMBL" id="AAFI02000148">
    <property type="protein sequence ID" value="EAL62574.1"/>
    <property type="molecule type" value="Genomic_DNA"/>
</dbReference>
<dbReference type="RefSeq" id="XP_636081.1">
    <property type="nucleotide sequence ID" value="XM_630989.1"/>
</dbReference>
<dbReference type="SMR" id="Q54H37"/>
<dbReference type="FunCoup" id="Q54H37">
    <property type="interactions" value="19"/>
</dbReference>
<dbReference type="STRING" id="44689.Q54H37"/>
<dbReference type="GlyCosmos" id="Q54H37">
    <property type="glycosylation" value="2 sites, No reported glycans"/>
</dbReference>
<dbReference type="GlyGen" id="Q54H37">
    <property type="glycosylation" value="2 sites"/>
</dbReference>
<dbReference type="PaxDb" id="44689-DDB0232056"/>
<dbReference type="EnsemblProtists" id="EAL62574">
    <property type="protein sequence ID" value="EAL62574"/>
    <property type="gene ID" value="DDB_G0289725"/>
</dbReference>
<dbReference type="GeneID" id="8627293"/>
<dbReference type="KEGG" id="ddi:DDB_G0289725"/>
<dbReference type="dictyBase" id="DDB_G0289725">
    <property type="gene designation" value="fscA"/>
</dbReference>
<dbReference type="VEuPathDB" id="AmoebaDB:DDB_G0289725"/>
<dbReference type="eggNOG" id="ENOG502RFCB">
    <property type="taxonomic scope" value="Eukaryota"/>
</dbReference>
<dbReference type="HOGENOM" id="CLU_036764_0_0_1"/>
<dbReference type="InParanoid" id="Q54H37"/>
<dbReference type="OMA" id="WILDEID"/>
<dbReference type="PhylomeDB" id="Q54H37"/>
<dbReference type="PRO" id="PR:Q54H37"/>
<dbReference type="Proteomes" id="UP000002195">
    <property type="component" value="Chromosome 5"/>
</dbReference>
<dbReference type="GO" id="GO:0016020">
    <property type="term" value="C:membrane"/>
    <property type="evidence" value="ECO:0007669"/>
    <property type="project" value="UniProtKB-SubCell"/>
</dbReference>
<dbReference type="GO" id="GO:0004888">
    <property type="term" value="F:transmembrane signaling receptor activity"/>
    <property type="evidence" value="ECO:0007669"/>
    <property type="project" value="InterPro"/>
</dbReference>
<dbReference type="GO" id="GO:0007166">
    <property type="term" value="P:cell surface receptor signaling pathway"/>
    <property type="evidence" value="ECO:0007669"/>
    <property type="project" value="InterPro"/>
</dbReference>
<dbReference type="Gene3D" id="1.20.1070.10">
    <property type="entry name" value="Rhodopsin 7-helix transmembrane proteins"/>
    <property type="match status" value="1"/>
</dbReference>
<dbReference type="InterPro" id="IPR000539">
    <property type="entry name" value="Frizzled/Smoothened_7TM"/>
</dbReference>
<dbReference type="InterPro" id="IPR017981">
    <property type="entry name" value="GPCR_2-like_7TM"/>
</dbReference>
<dbReference type="InterPro" id="IPR050949">
    <property type="entry name" value="GPCR_Fz/Smo-like"/>
</dbReference>
<dbReference type="PANTHER" id="PTHR31787:SF5">
    <property type="entry name" value="FRIZZLED_SMOOTHENED-LIKE SANS CRD PROTEIN A"/>
    <property type="match status" value="1"/>
</dbReference>
<dbReference type="PANTHER" id="PTHR31787">
    <property type="entry name" value="G-PROTEIN-COUPLED RECEPTOR GPCR FAMILY PROTEIN"/>
    <property type="match status" value="1"/>
</dbReference>
<dbReference type="Pfam" id="PF01534">
    <property type="entry name" value="Frizzled"/>
    <property type="match status" value="1"/>
</dbReference>
<dbReference type="PROSITE" id="PS50261">
    <property type="entry name" value="G_PROTEIN_RECEP_F2_4"/>
    <property type="match status" value="1"/>
</dbReference>